<name>CHO2_CANTT</name>
<feature type="chain" id="PRO_0000405885" description="Phosphatidylethanolamine N-methyltransferase">
    <location>
        <begin position="1"/>
        <end position="866"/>
    </location>
</feature>
<feature type="topological domain" description="Lumenal" evidence="1">
    <location>
        <begin position="1"/>
        <end position="65"/>
    </location>
</feature>
<feature type="transmembrane region" description="Helical" evidence="1">
    <location>
        <begin position="66"/>
        <end position="86"/>
    </location>
</feature>
<feature type="topological domain" description="Cytoplasmic" evidence="1">
    <location>
        <begin position="87"/>
        <end position="93"/>
    </location>
</feature>
<feature type="transmembrane region" description="Helical" evidence="1">
    <location>
        <begin position="94"/>
        <end position="114"/>
    </location>
</feature>
<feature type="topological domain" description="Lumenal" evidence="1">
    <location>
        <begin position="115"/>
        <end position="175"/>
    </location>
</feature>
<feature type="transmembrane region" description="Helical" evidence="1">
    <location>
        <begin position="176"/>
        <end position="196"/>
    </location>
</feature>
<feature type="topological domain" description="Cytoplasmic" evidence="1">
    <location>
        <begin position="197"/>
        <end position="207"/>
    </location>
</feature>
<feature type="transmembrane region" description="Helical" evidence="1">
    <location>
        <begin position="208"/>
        <end position="228"/>
    </location>
</feature>
<feature type="topological domain" description="Lumenal" evidence="1">
    <location>
        <begin position="229"/>
        <end position="263"/>
    </location>
</feature>
<feature type="transmembrane region" description="Helical" evidence="1">
    <location>
        <begin position="264"/>
        <end position="284"/>
    </location>
</feature>
<feature type="topological domain" description="Cytoplasmic" evidence="1">
    <location>
        <begin position="285"/>
        <end position="286"/>
    </location>
</feature>
<feature type="transmembrane region" description="Helical" evidence="1">
    <location>
        <begin position="287"/>
        <end position="307"/>
    </location>
</feature>
<feature type="topological domain" description="Lumenal" evidence="1">
    <location>
        <begin position="308"/>
        <end position="353"/>
    </location>
</feature>
<feature type="transmembrane region" description="Helical" evidence="1">
    <location>
        <begin position="354"/>
        <end position="374"/>
    </location>
</feature>
<feature type="topological domain" description="Cytoplasmic" evidence="1">
    <location>
        <begin position="375"/>
        <end position="379"/>
    </location>
</feature>
<feature type="transmembrane region" description="Helical" evidence="1">
    <location>
        <begin position="380"/>
        <end position="400"/>
    </location>
</feature>
<feature type="topological domain" description="Lumenal" evidence="1">
    <location>
        <begin position="401"/>
        <end position="425"/>
    </location>
</feature>
<feature type="transmembrane region" description="Helical" evidence="1">
    <location>
        <begin position="426"/>
        <end position="446"/>
    </location>
</feature>
<feature type="topological domain" description="Cytoplasmic" evidence="1">
    <location>
        <begin position="447"/>
        <end position="453"/>
    </location>
</feature>
<feature type="transmembrane region" description="Helical" evidence="1">
    <location>
        <begin position="454"/>
        <end position="474"/>
    </location>
</feature>
<feature type="topological domain" description="Lumenal" evidence="1">
    <location>
        <begin position="475"/>
        <end position="523"/>
    </location>
</feature>
<feature type="transmembrane region" description="Helical" evidence="1">
    <location>
        <begin position="524"/>
        <end position="544"/>
    </location>
</feature>
<feature type="topological domain" description="Cytoplasmic" evidence="1">
    <location>
        <begin position="545"/>
        <end position="866"/>
    </location>
</feature>
<proteinExistence type="inferred from homology"/>
<sequence>MPSLTQTRSTVSELNTSAIETSTMSDSGHQNKPKGPKGITFSGETFIVPETHDMVKTLFDPTIKKSNFELIILGLLFSNLLVFLIPNNNLRISIFIGFYIFWRLSYNFGIGWLLQHQSNDHLLVQWAIKYKLFDKNNKNFLAKLVQSEIKSQRGDAYDINSYPIEFNTWLIFRKFVDLILMSDFTTFICVVYACSINNDYQFIKNQPSWLTMSRIVGGSILILFNYWVKVNAHNTIKDYAWYWGDFFFRQINNEELIFDGVFEMFPHPMYSVGYVGYYGFALISKSYIVLLTAIFGHFLQMIFLHYIENPHIDKIYGPSKNEINLIKILKLKDLKNFDNLKPLVGLYNFNWMRASDVINLVLSLTYGLIIPVFAKSLKSLFVLTVATKLFESLSINILLILQSQFKFFTKWSLSNDIPIEKSLNNWAVLYNSLINLTYSSLFGLNLGYFLQGTGSSLVTDYFYLRLFLGLCLIYTQSWINLSIIDSIGYFGWFYGDFFIPKSQSSIKNLTQAGVYRYLNNPEQIFGVCGVMGVFLIHPTVENLTCCILWMVNNFVRINFIEKIHMIRIYGEKEVNRDSGVTKTVKKHLIPDVIQRKMSNDDPKRRGGVANGTSLGDSLDNFIKELRNSTTKLSQQKLIELSQNLSFANSNYKLSIDGLKESNELKYTTIGTPITVSWQSPSNTHSIRDWVGLYKIVQTSYSRNKTILSSAGRWTYCTDSKGVFTFEKEKLFWEEGVYEFRYHLDGKHDVAYISEPFEIKSVDIDVPGDISEAGEFSKQLKTEIFDKIIDIKSINESIAPIANQADNVIEVYKLFSSLISKSTQINVNYRIFLNNDNLSISDVAHKLIDIKQVLQELSFNSSEKKNL</sequence>
<evidence type="ECO:0000255" key="1">
    <source>
        <dbReference type="HAMAP-Rule" id="MF_03217"/>
    </source>
</evidence>
<dbReference type="EC" id="2.1.1.17" evidence="1"/>
<dbReference type="EMBL" id="GG692395">
    <property type="protein sequence ID" value="EER36184.1"/>
    <property type="molecule type" value="Genomic_DNA"/>
</dbReference>
<dbReference type="RefSeq" id="XP_002546142.1">
    <property type="nucleotide sequence ID" value="XM_002546096.1"/>
</dbReference>
<dbReference type="SMR" id="C5M4D4"/>
<dbReference type="STRING" id="294747.C5M4D4"/>
<dbReference type="EnsemblFungi" id="CTRG_00924-t43_1">
    <property type="protein sequence ID" value="CTRG_00924-t43_1-p1"/>
    <property type="gene ID" value="CTRG_00924"/>
</dbReference>
<dbReference type="GeneID" id="8299973"/>
<dbReference type="KEGG" id="ctp:CTRG_00924"/>
<dbReference type="VEuPathDB" id="FungiDB:CTRG_00924"/>
<dbReference type="eggNOG" id="ENOG502QRGH">
    <property type="taxonomic scope" value="Eukaryota"/>
</dbReference>
<dbReference type="HOGENOM" id="CLU_005987_0_1_1"/>
<dbReference type="OrthoDB" id="4583at2759"/>
<dbReference type="UniPathway" id="UPA00753"/>
<dbReference type="Proteomes" id="UP000002037">
    <property type="component" value="Unassembled WGS sequence"/>
</dbReference>
<dbReference type="GO" id="GO:0005789">
    <property type="term" value="C:endoplasmic reticulum membrane"/>
    <property type="evidence" value="ECO:0007669"/>
    <property type="project" value="UniProtKB-SubCell"/>
</dbReference>
<dbReference type="GO" id="GO:0004608">
    <property type="term" value="F:phosphatidylethanolamine N-methyltransferase activity"/>
    <property type="evidence" value="ECO:0007669"/>
    <property type="project" value="UniProtKB-UniRule"/>
</dbReference>
<dbReference type="GO" id="GO:0032259">
    <property type="term" value="P:methylation"/>
    <property type="evidence" value="ECO:0007669"/>
    <property type="project" value="UniProtKB-KW"/>
</dbReference>
<dbReference type="GO" id="GO:0006656">
    <property type="term" value="P:phosphatidylcholine biosynthetic process"/>
    <property type="evidence" value="ECO:0007669"/>
    <property type="project" value="UniProtKB-UniRule"/>
</dbReference>
<dbReference type="FunFam" id="1.20.120.1630:FF:000016">
    <property type="entry name" value="Phosphatidylethanolamine N-methyltransferase"/>
    <property type="match status" value="1"/>
</dbReference>
<dbReference type="Gene3D" id="1.20.120.1630">
    <property type="match status" value="1"/>
</dbReference>
<dbReference type="Gene3D" id="2.60.40.2840">
    <property type="match status" value="1"/>
</dbReference>
<dbReference type="HAMAP" id="MF_03217">
    <property type="entry name" value="PEMT"/>
    <property type="match status" value="1"/>
</dbReference>
<dbReference type="InterPro" id="IPR007318">
    <property type="entry name" value="Phopholipid_MeTrfase"/>
</dbReference>
<dbReference type="InterPro" id="IPR016219">
    <property type="entry name" value="Phosphatid-EA_MeTrfase_fun"/>
</dbReference>
<dbReference type="PANTHER" id="PTHR32138">
    <property type="entry name" value="PHOSPHATIDYLETHANOLAMINE N-METHYLTRANSFERASE"/>
    <property type="match status" value="1"/>
</dbReference>
<dbReference type="PANTHER" id="PTHR32138:SF0">
    <property type="entry name" value="PHOSPHATIDYLETHANOLAMINE N-METHYLTRANSFERASE"/>
    <property type="match status" value="1"/>
</dbReference>
<dbReference type="Pfam" id="PF04191">
    <property type="entry name" value="PEMT"/>
    <property type="match status" value="2"/>
</dbReference>
<dbReference type="PIRSF" id="PIRSF000383">
    <property type="entry name" value="PEAMT"/>
    <property type="match status" value="1"/>
</dbReference>
<dbReference type="PROSITE" id="PS51598">
    <property type="entry name" value="SAM_CHO2"/>
    <property type="match status" value="1"/>
</dbReference>
<comment type="function">
    <text evidence="1">Catalyzes the first step of the methylation pathway of phosphatidylcholine biosynthesis, the SAM-dependent methylation of phosphatidylethanolamine (PE) to phosphatidylmonomethylethanolamine (PMME).</text>
</comment>
<comment type="catalytic activity">
    <reaction evidence="1">
        <text>a 1,2-diacyl-sn-glycero-3-phosphoethanolamine + S-adenosyl-L-methionine = a 1,2-diacyl-sn-glycero-3-phospho-N-methylethanolamine + S-adenosyl-L-homocysteine + H(+)</text>
        <dbReference type="Rhea" id="RHEA:11164"/>
        <dbReference type="ChEBI" id="CHEBI:15378"/>
        <dbReference type="ChEBI" id="CHEBI:57856"/>
        <dbReference type="ChEBI" id="CHEBI:59789"/>
        <dbReference type="ChEBI" id="CHEBI:64573"/>
        <dbReference type="ChEBI" id="CHEBI:64612"/>
        <dbReference type="EC" id="2.1.1.17"/>
    </reaction>
</comment>
<comment type="pathway">
    <text evidence="1">Phospholipid metabolism; phosphatidylcholine biosynthesis.</text>
</comment>
<comment type="subcellular location">
    <subcellularLocation>
        <location evidence="1">Endoplasmic reticulum membrane</location>
        <topology evidence="1">Multi-pass membrane protein</topology>
    </subcellularLocation>
</comment>
<comment type="similarity">
    <text evidence="1">Belongs to the class VI-like SAM-binding methyltransferase superfamily. CHO2 family.</text>
</comment>
<keyword id="KW-0256">Endoplasmic reticulum</keyword>
<keyword id="KW-0444">Lipid biosynthesis</keyword>
<keyword id="KW-0443">Lipid metabolism</keyword>
<keyword id="KW-0472">Membrane</keyword>
<keyword id="KW-0489">Methyltransferase</keyword>
<keyword id="KW-0594">Phospholipid biosynthesis</keyword>
<keyword id="KW-1208">Phospholipid metabolism</keyword>
<keyword id="KW-1185">Reference proteome</keyword>
<keyword id="KW-0949">S-adenosyl-L-methionine</keyword>
<keyword id="KW-0808">Transferase</keyword>
<keyword id="KW-0812">Transmembrane</keyword>
<keyword id="KW-1133">Transmembrane helix</keyword>
<organism>
    <name type="scientific">Candida tropicalis (strain ATCC MYA-3404 / T1)</name>
    <name type="common">Yeast</name>
    <dbReference type="NCBI Taxonomy" id="294747"/>
    <lineage>
        <taxon>Eukaryota</taxon>
        <taxon>Fungi</taxon>
        <taxon>Dikarya</taxon>
        <taxon>Ascomycota</taxon>
        <taxon>Saccharomycotina</taxon>
        <taxon>Pichiomycetes</taxon>
        <taxon>Debaryomycetaceae</taxon>
        <taxon>Candida/Lodderomyces clade</taxon>
        <taxon>Candida</taxon>
    </lineage>
</organism>
<accession>C5M4D4</accession>
<gene>
    <name type="primary">CHO2</name>
    <name type="ORF">CTRG_00924</name>
</gene>
<reference key="1">
    <citation type="journal article" date="2009" name="Nature">
        <title>Evolution of pathogenicity and sexual reproduction in eight Candida genomes.</title>
        <authorList>
            <person name="Butler G."/>
            <person name="Rasmussen M.D."/>
            <person name="Lin M.F."/>
            <person name="Santos M.A.S."/>
            <person name="Sakthikumar S."/>
            <person name="Munro C.A."/>
            <person name="Rheinbay E."/>
            <person name="Grabherr M."/>
            <person name="Forche A."/>
            <person name="Reedy J.L."/>
            <person name="Agrafioti I."/>
            <person name="Arnaud M.B."/>
            <person name="Bates S."/>
            <person name="Brown A.J.P."/>
            <person name="Brunke S."/>
            <person name="Costanzo M.C."/>
            <person name="Fitzpatrick D.A."/>
            <person name="de Groot P.W.J."/>
            <person name="Harris D."/>
            <person name="Hoyer L.L."/>
            <person name="Hube B."/>
            <person name="Klis F.M."/>
            <person name="Kodira C."/>
            <person name="Lennard N."/>
            <person name="Logue M.E."/>
            <person name="Martin R."/>
            <person name="Neiman A.M."/>
            <person name="Nikolaou E."/>
            <person name="Quail M.A."/>
            <person name="Quinn J."/>
            <person name="Santos M.C."/>
            <person name="Schmitzberger F.F."/>
            <person name="Sherlock G."/>
            <person name="Shah P."/>
            <person name="Silverstein K.A.T."/>
            <person name="Skrzypek M.S."/>
            <person name="Soll D."/>
            <person name="Staggs R."/>
            <person name="Stansfield I."/>
            <person name="Stumpf M.P.H."/>
            <person name="Sudbery P.E."/>
            <person name="Srikantha T."/>
            <person name="Zeng Q."/>
            <person name="Berman J."/>
            <person name="Berriman M."/>
            <person name="Heitman J."/>
            <person name="Gow N.A.R."/>
            <person name="Lorenz M.C."/>
            <person name="Birren B.W."/>
            <person name="Kellis M."/>
            <person name="Cuomo C.A."/>
        </authorList>
    </citation>
    <scope>NUCLEOTIDE SEQUENCE [LARGE SCALE GENOMIC DNA]</scope>
    <source>
        <strain>ATCC MYA-3404 / T1</strain>
    </source>
</reference>
<protein>
    <recommendedName>
        <fullName evidence="1">Phosphatidylethanolamine N-methyltransferase</fullName>
        <shortName evidence="1">PE methyltransferase</shortName>
        <shortName evidence="1">PEAMT</shortName>
        <shortName evidence="1">PEMT</shortName>
        <ecNumber evidence="1">2.1.1.17</ecNumber>
    </recommendedName>
</protein>